<protein>
    <recommendedName>
        <fullName evidence="1">Holliday junction resolvase RecU</fullName>
        <ecNumber evidence="1">3.1.21.10</ecNumber>
    </recommendedName>
    <alternativeName>
        <fullName evidence="1">Recombination protein U homolog</fullName>
    </alternativeName>
</protein>
<sequence length="202" mass="23357">MVNYPHNLIRQKVSSVQKQTKQNKVDFANRGMSFEAAINATNDYYLSRQIAVIHKKPTPVQIVKVDYPKRSRAKIVEAYFRQASTTDYCGVYKGHYVDFEAKETRQKTAMPMKNFHLHQIEHMACVLHQKGICFVLLHFSTLKETYYLPAQALISFYQIDNGSKSMPIDYIRKNGFKVAFGAFPQVPYLNIIEQNFLGGDYN</sequence>
<keyword id="KW-0963">Cytoplasm</keyword>
<keyword id="KW-0227">DNA damage</keyword>
<keyword id="KW-0233">DNA recombination</keyword>
<keyword id="KW-0234">DNA repair</keyword>
<keyword id="KW-0255">Endonuclease</keyword>
<keyword id="KW-0378">Hydrolase</keyword>
<keyword id="KW-0460">Magnesium</keyword>
<keyword id="KW-0479">Metal-binding</keyword>
<keyword id="KW-0540">Nuclease</keyword>
<proteinExistence type="inferred from homology"/>
<comment type="function">
    <text evidence="1">Endonuclease that resolves Holliday junction intermediates in genetic recombination. Cleaves mobile four-strand junctions by introducing symmetrical nicks in paired strands. Promotes annealing of linear ssDNA with homologous dsDNA. Required for DNA repair, homologous recombination and chromosome segregation.</text>
</comment>
<comment type="catalytic activity">
    <reaction evidence="1">
        <text>Endonucleolytic cleavage at a junction such as a reciprocal single-stranded crossover between two homologous DNA duplexes (Holliday junction).</text>
        <dbReference type="EC" id="3.1.21.10"/>
    </reaction>
</comment>
<comment type="cofactor">
    <cofactor evidence="1">
        <name>Mg(2+)</name>
        <dbReference type="ChEBI" id="CHEBI:18420"/>
    </cofactor>
    <text evidence="1">Binds 1 Mg(2+) ion per subunit.</text>
</comment>
<comment type="subcellular location">
    <subcellularLocation>
        <location evidence="1">Cytoplasm</location>
    </subcellularLocation>
</comment>
<comment type="similarity">
    <text evidence="1">Belongs to the RecU family.</text>
</comment>
<gene>
    <name evidence="1" type="primary">recU</name>
    <name type="ordered locus">MGAS10750_Spy1463</name>
</gene>
<organism>
    <name type="scientific">Streptococcus pyogenes serotype M4 (strain MGAS10750)</name>
    <dbReference type="NCBI Taxonomy" id="370554"/>
    <lineage>
        <taxon>Bacteria</taxon>
        <taxon>Bacillati</taxon>
        <taxon>Bacillota</taxon>
        <taxon>Bacilli</taxon>
        <taxon>Lactobacillales</taxon>
        <taxon>Streptococcaceae</taxon>
        <taxon>Streptococcus</taxon>
    </lineage>
</organism>
<name>RECU_STRPF</name>
<accession>Q1J5H3</accession>
<feature type="chain" id="PRO_1000016751" description="Holliday junction resolvase RecU">
    <location>
        <begin position="1"/>
        <end position="202"/>
    </location>
</feature>
<feature type="binding site" evidence="1">
    <location>
        <position position="85"/>
    </location>
    <ligand>
        <name>Mg(2+)</name>
        <dbReference type="ChEBI" id="CHEBI:18420"/>
    </ligand>
</feature>
<feature type="binding site" evidence="1">
    <location>
        <position position="87"/>
    </location>
    <ligand>
        <name>Mg(2+)</name>
        <dbReference type="ChEBI" id="CHEBI:18420"/>
    </ligand>
</feature>
<feature type="binding site" evidence="1">
    <location>
        <position position="100"/>
    </location>
    <ligand>
        <name>Mg(2+)</name>
        <dbReference type="ChEBI" id="CHEBI:18420"/>
    </ligand>
</feature>
<feature type="binding site" evidence="1">
    <location>
        <position position="119"/>
    </location>
    <ligand>
        <name>Mg(2+)</name>
        <dbReference type="ChEBI" id="CHEBI:18420"/>
    </ligand>
</feature>
<feature type="site" description="Transition state stabilizer" evidence="1">
    <location>
        <position position="102"/>
    </location>
</feature>
<evidence type="ECO:0000255" key="1">
    <source>
        <dbReference type="HAMAP-Rule" id="MF_00130"/>
    </source>
</evidence>
<reference key="1">
    <citation type="journal article" date="2006" name="Proc. Natl. Acad. Sci. U.S.A.">
        <title>Molecular genetic anatomy of inter- and intraserotype variation in the human bacterial pathogen group A Streptococcus.</title>
        <authorList>
            <person name="Beres S.B."/>
            <person name="Richter E.W."/>
            <person name="Nagiec M.J."/>
            <person name="Sumby P."/>
            <person name="Porcella S.F."/>
            <person name="DeLeo F.R."/>
            <person name="Musser J.M."/>
        </authorList>
    </citation>
    <scope>NUCLEOTIDE SEQUENCE [LARGE SCALE GENOMIC DNA]</scope>
    <source>
        <strain>MGAS10750</strain>
    </source>
</reference>
<dbReference type="EC" id="3.1.21.10" evidence="1"/>
<dbReference type="EMBL" id="CP000262">
    <property type="protein sequence ID" value="ABF38413.1"/>
    <property type="molecule type" value="Genomic_DNA"/>
</dbReference>
<dbReference type="SMR" id="Q1J5H3"/>
<dbReference type="KEGG" id="spi:MGAS10750_Spy1463"/>
<dbReference type="HOGENOM" id="CLU_096340_0_0_9"/>
<dbReference type="Proteomes" id="UP000002434">
    <property type="component" value="Chromosome"/>
</dbReference>
<dbReference type="GO" id="GO:0005737">
    <property type="term" value="C:cytoplasm"/>
    <property type="evidence" value="ECO:0007669"/>
    <property type="project" value="UniProtKB-SubCell"/>
</dbReference>
<dbReference type="GO" id="GO:0004519">
    <property type="term" value="F:endonuclease activity"/>
    <property type="evidence" value="ECO:0007669"/>
    <property type="project" value="UniProtKB-UniRule"/>
</dbReference>
<dbReference type="GO" id="GO:0000287">
    <property type="term" value="F:magnesium ion binding"/>
    <property type="evidence" value="ECO:0007669"/>
    <property type="project" value="UniProtKB-UniRule"/>
</dbReference>
<dbReference type="GO" id="GO:0003676">
    <property type="term" value="F:nucleic acid binding"/>
    <property type="evidence" value="ECO:0007669"/>
    <property type="project" value="InterPro"/>
</dbReference>
<dbReference type="GO" id="GO:0007059">
    <property type="term" value="P:chromosome segregation"/>
    <property type="evidence" value="ECO:0007669"/>
    <property type="project" value="UniProtKB-UniRule"/>
</dbReference>
<dbReference type="GO" id="GO:0006310">
    <property type="term" value="P:DNA recombination"/>
    <property type="evidence" value="ECO:0007669"/>
    <property type="project" value="UniProtKB-UniRule"/>
</dbReference>
<dbReference type="GO" id="GO:0006281">
    <property type="term" value="P:DNA repair"/>
    <property type="evidence" value="ECO:0007669"/>
    <property type="project" value="UniProtKB-UniRule"/>
</dbReference>
<dbReference type="CDD" id="cd22354">
    <property type="entry name" value="RecU-like"/>
    <property type="match status" value="1"/>
</dbReference>
<dbReference type="Gene3D" id="3.40.1350.10">
    <property type="match status" value="1"/>
</dbReference>
<dbReference type="HAMAP" id="MF_00130">
    <property type="entry name" value="RecU"/>
    <property type="match status" value="1"/>
</dbReference>
<dbReference type="InterPro" id="IPR004612">
    <property type="entry name" value="Resolv_RecU"/>
</dbReference>
<dbReference type="InterPro" id="IPR011335">
    <property type="entry name" value="Restrct_endonuc-II-like"/>
</dbReference>
<dbReference type="InterPro" id="IPR011856">
    <property type="entry name" value="tRNA_endonuc-like_dom_sf"/>
</dbReference>
<dbReference type="NCBIfam" id="NF002580">
    <property type="entry name" value="PRK02234.1-1"/>
    <property type="match status" value="1"/>
</dbReference>
<dbReference type="NCBIfam" id="NF002584">
    <property type="entry name" value="PRK02234.1-5"/>
    <property type="match status" value="1"/>
</dbReference>
<dbReference type="NCBIfam" id="TIGR00648">
    <property type="entry name" value="recU"/>
    <property type="match status" value="1"/>
</dbReference>
<dbReference type="Pfam" id="PF03838">
    <property type="entry name" value="RecU"/>
    <property type="match status" value="1"/>
</dbReference>
<dbReference type="PIRSF" id="PIRSF037785">
    <property type="entry name" value="RecU"/>
    <property type="match status" value="1"/>
</dbReference>
<dbReference type="SUPFAM" id="SSF52980">
    <property type="entry name" value="Restriction endonuclease-like"/>
    <property type="match status" value="1"/>
</dbReference>